<reference key="1">
    <citation type="journal article" date="2002" name="DNA Res.">
        <title>Complete genomic sequence of nitrogen-fixing symbiotic bacterium Bradyrhizobium japonicum USDA110.</title>
        <authorList>
            <person name="Kaneko T."/>
            <person name="Nakamura Y."/>
            <person name="Sato S."/>
            <person name="Minamisawa K."/>
            <person name="Uchiumi T."/>
            <person name="Sasamoto S."/>
            <person name="Watanabe A."/>
            <person name="Idesawa K."/>
            <person name="Iriguchi M."/>
            <person name="Kawashima K."/>
            <person name="Kohara M."/>
            <person name="Matsumoto M."/>
            <person name="Shimpo S."/>
            <person name="Tsuruoka H."/>
            <person name="Wada T."/>
            <person name="Yamada M."/>
            <person name="Tabata S."/>
        </authorList>
    </citation>
    <scope>NUCLEOTIDE SEQUENCE [LARGE SCALE GENOMIC DNA]</scope>
    <source>
        <strain>JCM 10833 / BCRC 13528 / IAM 13628 / NBRC 14792 / USDA 110</strain>
    </source>
</reference>
<protein>
    <recommendedName>
        <fullName evidence="1">ATP synthase gamma chain</fullName>
    </recommendedName>
    <alternativeName>
        <fullName evidence="1">ATP synthase F1 sector gamma subunit</fullName>
    </alternativeName>
    <alternativeName>
        <fullName evidence="1">F-ATPase gamma subunit</fullName>
    </alternativeName>
</protein>
<sequence>MASLKDMRVRIASTKATQKITKAMQMVAASKLRRAQTAAEAARPYADKMSAVISNIAGAAAGSPGAPALLAGTGRDQVHLLLVCTGERGLSGAFNSSIVRLARERALALMAQGKEVKFFCVGRKGYEQLRRQFDKQIVEHLDLRSVRQLGFVNAEDIAKKVLARFEAGEFDVCTLFYSRFRSVIAQIPTAQQIIPLVVEEGTAASTTSYEYEPEEDEILTRLLPRNLAVQIFRALLENNASFYGAQMSAMDNATRNAGEMIRKQTLVYNRTRQAQITKELIEIISGAEAV</sequence>
<accession>Q89X73</accession>
<organism>
    <name type="scientific">Bradyrhizobium diazoefficiens (strain JCM 10833 / BCRC 13528 / IAM 13628 / NBRC 14792 / USDA 110)</name>
    <dbReference type="NCBI Taxonomy" id="224911"/>
    <lineage>
        <taxon>Bacteria</taxon>
        <taxon>Pseudomonadati</taxon>
        <taxon>Pseudomonadota</taxon>
        <taxon>Alphaproteobacteria</taxon>
        <taxon>Hyphomicrobiales</taxon>
        <taxon>Nitrobacteraceae</taxon>
        <taxon>Bradyrhizobium</taxon>
    </lineage>
</organism>
<feature type="chain" id="PRO_0000073248" description="ATP synthase gamma chain">
    <location>
        <begin position="1"/>
        <end position="290"/>
    </location>
</feature>
<name>ATPG_BRADU</name>
<keyword id="KW-0066">ATP synthesis</keyword>
<keyword id="KW-0997">Cell inner membrane</keyword>
<keyword id="KW-1003">Cell membrane</keyword>
<keyword id="KW-0139">CF(1)</keyword>
<keyword id="KW-0375">Hydrogen ion transport</keyword>
<keyword id="KW-0406">Ion transport</keyword>
<keyword id="KW-0472">Membrane</keyword>
<keyword id="KW-1185">Reference proteome</keyword>
<keyword id="KW-0813">Transport</keyword>
<comment type="function">
    <text evidence="1">Produces ATP from ADP in the presence of a proton gradient across the membrane. The gamma chain is believed to be important in regulating ATPase activity and the flow of protons through the CF(0) complex.</text>
</comment>
<comment type="subunit">
    <text evidence="1">F-type ATPases have 2 components, CF(1) - the catalytic core - and CF(0) - the membrane proton channel. CF(1) has five subunits: alpha(3), beta(3), gamma(1), delta(1), epsilon(1). CF(0) has three main subunits: a, b and c.</text>
</comment>
<comment type="subcellular location">
    <subcellularLocation>
        <location evidence="1">Cell inner membrane</location>
        <topology evidence="1">Peripheral membrane protein</topology>
    </subcellularLocation>
</comment>
<comment type="similarity">
    <text evidence="1">Belongs to the ATPase gamma chain family.</text>
</comment>
<dbReference type="EMBL" id="BA000040">
    <property type="protein sequence ID" value="BAC45706.1"/>
    <property type="molecule type" value="Genomic_DNA"/>
</dbReference>
<dbReference type="RefSeq" id="NP_767081.1">
    <property type="nucleotide sequence ID" value="NC_004463.1"/>
</dbReference>
<dbReference type="RefSeq" id="WP_011083273.1">
    <property type="nucleotide sequence ID" value="NC_004463.1"/>
</dbReference>
<dbReference type="SMR" id="Q89X73"/>
<dbReference type="FunCoup" id="Q89X73">
    <property type="interactions" value="524"/>
</dbReference>
<dbReference type="STRING" id="224911.AAV28_41455"/>
<dbReference type="EnsemblBacteria" id="BAC45706">
    <property type="protein sequence ID" value="BAC45706"/>
    <property type="gene ID" value="BAC45706"/>
</dbReference>
<dbReference type="GeneID" id="46495587"/>
<dbReference type="KEGG" id="bja:bll0441"/>
<dbReference type="PATRIC" id="fig|224911.44.peg.8971"/>
<dbReference type="eggNOG" id="COG0224">
    <property type="taxonomic scope" value="Bacteria"/>
</dbReference>
<dbReference type="HOGENOM" id="CLU_050669_0_1_5"/>
<dbReference type="InParanoid" id="Q89X73"/>
<dbReference type="OrthoDB" id="9812769at2"/>
<dbReference type="PhylomeDB" id="Q89X73"/>
<dbReference type="Proteomes" id="UP000002526">
    <property type="component" value="Chromosome"/>
</dbReference>
<dbReference type="GO" id="GO:0005886">
    <property type="term" value="C:plasma membrane"/>
    <property type="evidence" value="ECO:0007669"/>
    <property type="project" value="UniProtKB-SubCell"/>
</dbReference>
<dbReference type="GO" id="GO:0045259">
    <property type="term" value="C:proton-transporting ATP synthase complex"/>
    <property type="evidence" value="ECO:0007669"/>
    <property type="project" value="UniProtKB-KW"/>
</dbReference>
<dbReference type="GO" id="GO:0005524">
    <property type="term" value="F:ATP binding"/>
    <property type="evidence" value="ECO:0007669"/>
    <property type="project" value="UniProtKB-UniRule"/>
</dbReference>
<dbReference type="GO" id="GO:0046933">
    <property type="term" value="F:proton-transporting ATP synthase activity, rotational mechanism"/>
    <property type="evidence" value="ECO:0007669"/>
    <property type="project" value="UniProtKB-UniRule"/>
</dbReference>
<dbReference type="GO" id="GO:0015986">
    <property type="term" value="P:proton motive force-driven ATP synthesis"/>
    <property type="evidence" value="ECO:0000318"/>
    <property type="project" value="GO_Central"/>
</dbReference>
<dbReference type="GO" id="GO:0042777">
    <property type="term" value="P:proton motive force-driven plasma membrane ATP synthesis"/>
    <property type="evidence" value="ECO:0007669"/>
    <property type="project" value="UniProtKB-UniRule"/>
</dbReference>
<dbReference type="CDD" id="cd12151">
    <property type="entry name" value="F1-ATPase_gamma"/>
    <property type="match status" value="1"/>
</dbReference>
<dbReference type="FunFam" id="1.10.287.80:FF:000001">
    <property type="entry name" value="ATP synthase gamma chain"/>
    <property type="match status" value="1"/>
</dbReference>
<dbReference type="FunFam" id="3.40.1380.10:FF:000016">
    <property type="entry name" value="ATP synthase gamma chain"/>
    <property type="match status" value="1"/>
</dbReference>
<dbReference type="Gene3D" id="3.40.1380.10">
    <property type="match status" value="1"/>
</dbReference>
<dbReference type="Gene3D" id="1.10.287.80">
    <property type="entry name" value="ATP synthase, gamma subunit, helix hairpin domain"/>
    <property type="match status" value="1"/>
</dbReference>
<dbReference type="HAMAP" id="MF_00815">
    <property type="entry name" value="ATP_synth_gamma_bact"/>
    <property type="match status" value="1"/>
</dbReference>
<dbReference type="InterPro" id="IPR035968">
    <property type="entry name" value="ATP_synth_F1_ATPase_gsu"/>
</dbReference>
<dbReference type="InterPro" id="IPR000131">
    <property type="entry name" value="ATP_synth_F1_gsu"/>
</dbReference>
<dbReference type="InterPro" id="IPR023632">
    <property type="entry name" value="ATP_synth_F1_gsu_CS"/>
</dbReference>
<dbReference type="NCBIfam" id="TIGR01146">
    <property type="entry name" value="ATPsyn_F1gamma"/>
    <property type="match status" value="1"/>
</dbReference>
<dbReference type="NCBIfam" id="NF004146">
    <property type="entry name" value="PRK05621.1-4"/>
    <property type="match status" value="1"/>
</dbReference>
<dbReference type="PANTHER" id="PTHR11693">
    <property type="entry name" value="ATP SYNTHASE GAMMA CHAIN"/>
    <property type="match status" value="1"/>
</dbReference>
<dbReference type="PANTHER" id="PTHR11693:SF22">
    <property type="entry name" value="ATP SYNTHASE SUBUNIT GAMMA, MITOCHONDRIAL"/>
    <property type="match status" value="1"/>
</dbReference>
<dbReference type="Pfam" id="PF00231">
    <property type="entry name" value="ATP-synt"/>
    <property type="match status" value="1"/>
</dbReference>
<dbReference type="PIRSF" id="PIRSF039089">
    <property type="entry name" value="ATP_synthase_gamma"/>
    <property type="match status" value="1"/>
</dbReference>
<dbReference type="PRINTS" id="PR00126">
    <property type="entry name" value="ATPASEGAMMA"/>
</dbReference>
<dbReference type="SUPFAM" id="SSF52943">
    <property type="entry name" value="ATP synthase (F1-ATPase), gamma subunit"/>
    <property type="match status" value="1"/>
</dbReference>
<dbReference type="PROSITE" id="PS00153">
    <property type="entry name" value="ATPASE_GAMMA"/>
    <property type="match status" value="1"/>
</dbReference>
<gene>
    <name evidence="1" type="primary">atpG</name>
    <name type="ordered locus">bll0441</name>
</gene>
<evidence type="ECO:0000255" key="1">
    <source>
        <dbReference type="HAMAP-Rule" id="MF_00815"/>
    </source>
</evidence>
<proteinExistence type="inferred from homology"/>